<protein>
    <recommendedName>
        <fullName evidence="1">UPF0597 protein Dvul_2496</fullName>
    </recommendedName>
</protein>
<organism>
    <name type="scientific">Nitratidesulfovibrio vulgaris (strain DP4)</name>
    <name type="common">Desulfovibrio vulgaris</name>
    <dbReference type="NCBI Taxonomy" id="391774"/>
    <lineage>
        <taxon>Bacteria</taxon>
        <taxon>Pseudomonadati</taxon>
        <taxon>Thermodesulfobacteriota</taxon>
        <taxon>Desulfovibrionia</taxon>
        <taxon>Desulfovibrionales</taxon>
        <taxon>Desulfovibrionaceae</taxon>
        <taxon>Nitratidesulfovibrio</taxon>
    </lineage>
</organism>
<reference key="1">
    <citation type="journal article" date="2009" name="Environ. Microbiol.">
        <title>Contribution of mobile genetic elements to Desulfovibrio vulgaris genome plasticity.</title>
        <authorList>
            <person name="Walker C.B."/>
            <person name="Stolyar S."/>
            <person name="Chivian D."/>
            <person name="Pinel N."/>
            <person name="Gabster J.A."/>
            <person name="Dehal P.S."/>
            <person name="He Z."/>
            <person name="Yang Z.K."/>
            <person name="Yen H.C."/>
            <person name="Zhou J."/>
            <person name="Wall J.D."/>
            <person name="Hazen T.C."/>
            <person name="Arkin A.P."/>
            <person name="Stahl D.A."/>
        </authorList>
    </citation>
    <scope>NUCLEOTIDE SEQUENCE [LARGE SCALE GENOMIC DNA]</scope>
    <source>
        <strain>DP4</strain>
    </source>
</reference>
<sequence length="443" mass="44664">MDLALFFRNEVKPALGCTEPGAVAYAASIAARHCPGEPLSVALSLSLSMFKNGRDVGIPGTGGLRGNRLAAVLGVLAGDADKGLMALEHIDMAVVERAQTLLDAGMVTEEVVDGVPGVYAAVTLRCAGHEVTVTVAGRHDRVASIVVDGEVVGGEGMERAPEADGTLHGGASCEPSASFTEPPLPAYLEELRECDFAQLWDMAAGIDATLEQELLRGAAMNMAVARMGLESGWGLGVGHTLAAHAEAADLHARIRFMAGAAADVRMAGAPQPVMSSAGSGNHGITATVPVAVAAEGLGVSPRVQAEALALSHLVTGYLKAHTGRLTPICGCSVAAGAGAAAGIVKVLGGNAVQAERAVASLMASLMGMLCDGAKGSCGLKVATAAGEAYAAALLGMDDRGVQRPEGVVNPDIATTARALARLSREGFAAADAVMVELLGGGKH</sequence>
<feature type="chain" id="PRO_0000339815" description="UPF0597 protein Dvul_2496">
    <location>
        <begin position="1"/>
        <end position="443"/>
    </location>
</feature>
<feature type="region of interest" description="Disordered" evidence="2">
    <location>
        <begin position="156"/>
        <end position="178"/>
    </location>
</feature>
<evidence type="ECO:0000255" key="1">
    <source>
        <dbReference type="HAMAP-Rule" id="MF_01845"/>
    </source>
</evidence>
<evidence type="ECO:0000256" key="2">
    <source>
        <dbReference type="SAM" id="MobiDB-lite"/>
    </source>
</evidence>
<comment type="similarity">
    <text evidence="1">Belongs to the UPF0597 family.</text>
</comment>
<gene>
    <name type="ordered locus">Dvul_2496</name>
</gene>
<proteinExistence type="inferred from homology"/>
<name>Y2496_NITV4</name>
<dbReference type="EMBL" id="CP000527">
    <property type="protein sequence ID" value="ABM29512.1"/>
    <property type="molecule type" value="Genomic_DNA"/>
</dbReference>
<dbReference type="RefSeq" id="WP_011792892.1">
    <property type="nucleotide sequence ID" value="NC_008751.1"/>
</dbReference>
<dbReference type="SMR" id="A1VGE6"/>
<dbReference type="KEGG" id="dvl:Dvul_2496"/>
<dbReference type="HOGENOM" id="CLU_051840_0_0_7"/>
<dbReference type="Proteomes" id="UP000009173">
    <property type="component" value="Chromosome"/>
</dbReference>
<dbReference type="GO" id="GO:0080146">
    <property type="term" value="F:L-cysteine desulfhydrase activity"/>
    <property type="evidence" value="ECO:0007669"/>
    <property type="project" value="TreeGrafter"/>
</dbReference>
<dbReference type="GO" id="GO:0019450">
    <property type="term" value="P:L-cysteine catabolic process to pyruvate"/>
    <property type="evidence" value="ECO:0007669"/>
    <property type="project" value="TreeGrafter"/>
</dbReference>
<dbReference type="HAMAP" id="MF_01845">
    <property type="entry name" value="UPF0597"/>
    <property type="match status" value="1"/>
</dbReference>
<dbReference type="InterPro" id="IPR005130">
    <property type="entry name" value="Ser_deHydtase-like_asu"/>
</dbReference>
<dbReference type="InterPro" id="IPR021144">
    <property type="entry name" value="UPF0597"/>
</dbReference>
<dbReference type="PANTHER" id="PTHR30501">
    <property type="entry name" value="UPF0597 PROTEIN YHAM"/>
    <property type="match status" value="1"/>
</dbReference>
<dbReference type="PANTHER" id="PTHR30501:SF2">
    <property type="entry name" value="UPF0597 PROTEIN YHAM"/>
    <property type="match status" value="1"/>
</dbReference>
<dbReference type="Pfam" id="PF03313">
    <property type="entry name" value="SDH_alpha"/>
    <property type="match status" value="1"/>
</dbReference>
<dbReference type="PIRSF" id="PIRSF006054">
    <property type="entry name" value="UCP006054"/>
    <property type="match status" value="1"/>
</dbReference>
<accession>A1VGE6</accession>